<comment type="function">
    <text evidence="1">Catalyzes the base-exchange of a guanine (G) residue with the queuine precursor 7-aminomethyl-7-deazaguanine (PreQ1) at position 34 (anticodon wobble position) in tRNAs with GU(N) anticodons (tRNA-Asp, -Asn, -His and -Tyr). Catalysis occurs through a double-displacement mechanism. The nucleophile active site attacks the C1' of nucleotide 34 to detach the guanine base from the RNA, forming a covalent enzyme-RNA intermediate. The proton acceptor active site deprotonates the incoming PreQ1, allowing a nucleophilic attack on the C1' of the ribose to form the product. After dissociation, two additional enzymatic reactions on the tRNA convert PreQ1 to queuine (Q), resulting in the hypermodified nucleoside queuosine (7-(((4,5-cis-dihydroxy-2-cyclopenten-1-yl)amino)methyl)-7-deazaguanosine).</text>
</comment>
<comment type="catalytic activity">
    <reaction evidence="1">
        <text>7-aminomethyl-7-carbaguanine + guanosine(34) in tRNA = 7-aminomethyl-7-carbaguanosine(34) in tRNA + guanine</text>
        <dbReference type="Rhea" id="RHEA:24104"/>
        <dbReference type="Rhea" id="RHEA-COMP:10341"/>
        <dbReference type="Rhea" id="RHEA-COMP:10342"/>
        <dbReference type="ChEBI" id="CHEBI:16235"/>
        <dbReference type="ChEBI" id="CHEBI:58703"/>
        <dbReference type="ChEBI" id="CHEBI:74269"/>
        <dbReference type="ChEBI" id="CHEBI:82833"/>
        <dbReference type="EC" id="2.4.2.29"/>
    </reaction>
</comment>
<comment type="cofactor">
    <cofactor evidence="1">
        <name>Zn(2+)</name>
        <dbReference type="ChEBI" id="CHEBI:29105"/>
    </cofactor>
    <text evidence="1">Binds 1 zinc ion per subunit.</text>
</comment>
<comment type="pathway">
    <text evidence="1">tRNA modification; tRNA-queuosine biosynthesis.</text>
</comment>
<comment type="subunit">
    <text evidence="1">Homodimer. Within each dimer, one monomer is responsible for RNA recognition and catalysis, while the other monomer binds to the replacement base PreQ1.</text>
</comment>
<comment type="similarity">
    <text evidence="1">Belongs to the queuine tRNA-ribosyltransferase family.</text>
</comment>
<sequence>MTDYPIKYRLIKTEKHTGARLGEIITPHGTFPTPMFMPVGTQATVKTQSPEELKAIGSGIILSNTYHLWLRPGDELIARSGGLHKFMNWDQPILTDSGGFQVYSLADSRNITEEGVTFKNHLNGSKMFLSPEKAISIQNNLGSDIMMSFDECPQFYQPYDYVKKSIERTSRWAERGLKAHRRPHDQGLFGIVQGAGFEDLRRQSAADLVAMDFPGYSIGGLAVGESHEEMNAVLDFTTPLLPENKPRYLMGVGAPDSLIDGVIRGVDMFDCVLPTRIARNGTCMTSEGRLVVKNAKFAEDFTPLDHDCDCYTCQNYSRAYIRHLLKADETFGIRLTSYHNLYFLVNLMKKVRQAIMDDNLLEFRQDFLERYGYNKSNRNF</sequence>
<gene>
    <name evidence="1" type="primary">tgt</name>
    <name type="ordered locus">MGAS10750_Spy0170</name>
</gene>
<evidence type="ECO:0000255" key="1">
    <source>
        <dbReference type="HAMAP-Rule" id="MF_00168"/>
    </source>
</evidence>
<protein>
    <recommendedName>
        <fullName evidence="1">Queuine tRNA-ribosyltransferase</fullName>
        <ecNumber evidence="1">2.4.2.29</ecNumber>
    </recommendedName>
    <alternativeName>
        <fullName evidence="1">Guanine insertion enzyme</fullName>
    </alternativeName>
    <alternativeName>
        <fullName evidence="1">tRNA-guanine transglycosylase</fullName>
    </alternativeName>
</protein>
<proteinExistence type="inferred from homology"/>
<reference key="1">
    <citation type="journal article" date="2006" name="Proc. Natl. Acad. Sci. U.S.A.">
        <title>Molecular genetic anatomy of inter- and intraserotype variation in the human bacterial pathogen group A Streptococcus.</title>
        <authorList>
            <person name="Beres S.B."/>
            <person name="Richter E.W."/>
            <person name="Nagiec M.J."/>
            <person name="Sumby P."/>
            <person name="Porcella S.F."/>
            <person name="DeLeo F.R."/>
            <person name="Musser J.M."/>
        </authorList>
    </citation>
    <scope>NUCLEOTIDE SEQUENCE [LARGE SCALE GENOMIC DNA]</scope>
    <source>
        <strain>MGAS10750</strain>
    </source>
</reference>
<accession>Q1J8P1</accession>
<keyword id="KW-0328">Glycosyltransferase</keyword>
<keyword id="KW-0479">Metal-binding</keyword>
<keyword id="KW-0671">Queuosine biosynthesis</keyword>
<keyword id="KW-0808">Transferase</keyword>
<keyword id="KW-0819">tRNA processing</keyword>
<keyword id="KW-0862">Zinc</keyword>
<dbReference type="EC" id="2.4.2.29" evidence="1"/>
<dbReference type="EMBL" id="CP000262">
    <property type="protein sequence ID" value="ABF37120.1"/>
    <property type="molecule type" value="Genomic_DNA"/>
</dbReference>
<dbReference type="SMR" id="Q1J8P1"/>
<dbReference type="KEGG" id="spi:MGAS10750_Spy0170"/>
<dbReference type="HOGENOM" id="CLU_022060_0_1_9"/>
<dbReference type="UniPathway" id="UPA00392"/>
<dbReference type="Proteomes" id="UP000002434">
    <property type="component" value="Chromosome"/>
</dbReference>
<dbReference type="GO" id="GO:0005829">
    <property type="term" value="C:cytosol"/>
    <property type="evidence" value="ECO:0007669"/>
    <property type="project" value="TreeGrafter"/>
</dbReference>
<dbReference type="GO" id="GO:0046872">
    <property type="term" value="F:metal ion binding"/>
    <property type="evidence" value="ECO:0007669"/>
    <property type="project" value="UniProtKB-KW"/>
</dbReference>
<dbReference type="GO" id="GO:0008479">
    <property type="term" value="F:tRNA-guanosine(34) queuine transglycosylase activity"/>
    <property type="evidence" value="ECO:0007669"/>
    <property type="project" value="UniProtKB-UniRule"/>
</dbReference>
<dbReference type="GO" id="GO:0008616">
    <property type="term" value="P:queuosine biosynthetic process"/>
    <property type="evidence" value="ECO:0007669"/>
    <property type="project" value="UniProtKB-UniRule"/>
</dbReference>
<dbReference type="GO" id="GO:0002099">
    <property type="term" value="P:tRNA wobble guanine modification"/>
    <property type="evidence" value="ECO:0007669"/>
    <property type="project" value="TreeGrafter"/>
</dbReference>
<dbReference type="GO" id="GO:0101030">
    <property type="term" value="P:tRNA-guanine transglycosylation"/>
    <property type="evidence" value="ECO:0007669"/>
    <property type="project" value="InterPro"/>
</dbReference>
<dbReference type="FunFam" id="3.20.20.105:FF:000001">
    <property type="entry name" value="Queuine tRNA-ribosyltransferase"/>
    <property type="match status" value="1"/>
</dbReference>
<dbReference type="Gene3D" id="3.20.20.105">
    <property type="entry name" value="Queuine tRNA-ribosyltransferase-like"/>
    <property type="match status" value="1"/>
</dbReference>
<dbReference type="HAMAP" id="MF_00168">
    <property type="entry name" value="Q_tRNA_Tgt"/>
    <property type="match status" value="1"/>
</dbReference>
<dbReference type="InterPro" id="IPR050076">
    <property type="entry name" value="ArchSynthase1/Queuine_TRR"/>
</dbReference>
<dbReference type="InterPro" id="IPR004803">
    <property type="entry name" value="TGT"/>
</dbReference>
<dbReference type="InterPro" id="IPR036511">
    <property type="entry name" value="TGT-like_sf"/>
</dbReference>
<dbReference type="InterPro" id="IPR002616">
    <property type="entry name" value="tRNA_ribo_trans-like"/>
</dbReference>
<dbReference type="NCBIfam" id="TIGR00430">
    <property type="entry name" value="Q_tRNA_tgt"/>
    <property type="match status" value="1"/>
</dbReference>
<dbReference type="NCBIfam" id="TIGR00449">
    <property type="entry name" value="tgt_general"/>
    <property type="match status" value="1"/>
</dbReference>
<dbReference type="PANTHER" id="PTHR46499">
    <property type="entry name" value="QUEUINE TRNA-RIBOSYLTRANSFERASE"/>
    <property type="match status" value="1"/>
</dbReference>
<dbReference type="PANTHER" id="PTHR46499:SF1">
    <property type="entry name" value="QUEUINE TRNA-RIBOSYLTRANSFERASE"/>
    <property type="match status" value="1"/>
</dbReference>
<dbReference type="Pfam" id="PF01702">
    <property type="entry name" value="TGT"/>
    <property type="match status" value="1"/>
</dbReference>
<dbReference type="SUPFAM" id="SSF51713">
    <property type="entry name" value="tRNA-guanine transglycosylase"/>
    <property type="match status" value="1"/>
</dbReference>
<name>TGT_STRPF</name>
<organism>
    <name type="scientific">Streptococcus pyogenes serotype M4 (strain MGAS10750)</name>
    <dbReference type="NCBI Taxonomy" id="370554"/>
    <lineage>
        <taxon>Bacteria</taxon>
        <taxon>Bacillati</taxon>
        <taxon>Bacillota</taxon>
        <taxon>Bacilli</taxon>
        <taxon>Lactobacillales</taxon>
        <taxon>Streptococcaceae</taxon>
        <taxon>Streptococcus</taxon>
    </lineage>
</organism>
<feature type="chain" id="PRO_1000016871" description="Queuine tRNA-ribosyltransferase">
    <location>
        <begin position="1"/>
        <end position="380"/>
    </location>
</feature>
<feature type="region of interest" description="RNA binding" evidence="1">
    <location>
        <begin position="251"/>
        <end position="257"/>
    </location>
</feature>
<feature type="region of interest" description="RNA binding; important for wobble base 34 recognition" evidence="1">
    <location>
        <begin position="275"/>
        <end position="279"/>
    </location>
</feature>
<feature type="active site" description="Proton acceptor" evidence="1">
    <location>
        <position position="96"/>
    </location>
</feature>
<feature type="active site" description="Nucleophile" evidence="1">
    <location>
        <position position="270"/>
    </location>
</feature>
<feature type="binding site" evidence="1">
    <location>
        <begin position="96"/>
        <end position="100"/>
    </location>
    <ligand>
        <name>substrate</name>
    </ligand>
</feature>
<feature type="binding site" evidence="1">
    <location>
        <position position="150"/>
    </location>
    <ligand>
        <name>substrate</name>
    </ligand>
</feature>
<feature type="binding site" evidence="1">
    <location>
        <position position="193"/>
    </location>
    <ligand>
        <name>substrate</name>
    </ligand>
</feature>
<feature type="binding site" evidence="1">
    <location>
        <position position="220"/>
    </location>
    <ligand>
        <name>substrate</name>
    </ligand>
</feature>
<feature type="binding site" evidence="1">
    <location>
        <position position="308"/>
    </location>
    <ligand>
        <name>Zn(2+)</name>
        <dbReference type="ChEBI" id="CHEBI:29105"/>
    </ligand>
</feature>
<feature type="binding site" evidence="1">
    <location>
        <position position="310"/>
    </location>
    <ligand>
        <name>Zn(2+)</name>
        <dbReference type="ChEBI" id="CHEBI:29105"/>
    </ligand>
</feature>
<feature type="binding site" evidence="1">
    <location>
        <position position="313"/>
    </location>
    <ligand>
        <name>Zn(2+)</name>
        <dbReference type="ChEBI" id="CHEBI:29105"/>
    </ligand>
</feature>
<feature type="binding site" evidence="1">
    <location>
        <position position="339"/>
    </location>
    <ligand>
        <name>Zn(2+)</name>
        <dbReference type="ChEBI" id="CHEBI:29105"/>
    </ligand>
</feature>